<keyword id="KW-0328">Glycosyltransferase</keyword>
<keyword id="KW-1185">Reference proteome</keyword>
<keyword id="KW-0808">Transferase</keyword>
<organism>
    <name type="scientific">Haemophilus influenzae (strain ATCC 51907 / DSM 11121 / KW20 / Rd)</name>
    <dbReference type="NCBI Taxonomy" id="71421"/>
    <lineage>
        <taxon>Bacteria</taxon>
        <taxon>Pseudomonadati</taxon>
        <taxon>Pseudomonadota</taxon>
        <taxon>Gammaproteobacteria</taxon>
        <taxon>Pasteurellales</taxon>
        <taxon>Pasteurellaceae</taxon>
        <taxon>Haemophilus</taxon>
    </lineage>
</organism>
<accession>P44011</accession>
<reference key="1">
    <citation type="journal article" date="1995" name="Science">
        <title>Whole-genome random sequencing and assembly of Haemophilus influenzae Rd.</title>
        <authorList>
            <person name="Fleischmann R.D."/>
            <person name="Adams M.D."/>
            <person name="White O."/>
            <person name="Clayton R.A."/>
            <person name="Kirkness E.F."/>
            <person name="Kerlavage A.R."/>
            <person name="Bult C.J."/>
            <person name="Tomb J.-F."/>
            <person name="Dougherty B.A."/>
            <person name="Merrick J.M."/>
            <person name="McKenney K."/>
            <person name="Sutton G.G."/>
            <person name="FitzHugh W."/>
            <person name="Fields C.A."/>
            <person name="Gocayne J.D."/>
            <person name="Scott J.D."/>
            <person name="Shirley R."/>
            <person name="Liu L.-I."/>
            <person name="Glodek A."/>
            <person name="Kelley J.M."/>
            <person name="Weidman J.F."/>
            <person name="Phillips C.A."/>
            <person name="Spriggs T."/>
            <person name="Hedblom E."/>
            <person name="Cotton M.D."/>
            <person name="Utterback T.R."/>
            <person name="Hanna M.C."/>
            <person name="Nguyen D.T."/>
            <person name="Saudek D.M."/>
            <person name="Brandon R.C."/>
            <person name="Fine L.D."/>
            <person name="Fritchman J.L."/>
            <person name="Fuhrmann J.L."/>
            <person name="Geoghagen N.S.M."/>
            <person name="Gnehm C.L."/>
            <person name="McDonald L.A."/>
            <person name="Small K.V."/>
            <person name="Fraser C.M."/>
            <person name="Smith H.O."/>
            <person name="Venter J.C."/>
        </authorList>
    </citation>
    <scope>NUCLEOTIDE SEQUENCE [LARGE SCALE GENOMIC DNA]</scope>
    <source>
        <strain>ATCC 51907 / DSM 11121 / KW20 / Rd</strain>
    </source>
</reference>
<sequence length="346" mass="38906">MEKILVIRNDKLGDFMQAWPAFAMLKASNPKLKLTALVPSYTASLAEICPFIDHVIIDSKKNDKTDFKRLVQEIKAQQFDGMISFFSNTHNGKLAWKSGIKYRLAPATKWVQILYNHRLTQRRSRSEKSEAEYNQDLVRTFLQKHNMPVVEPKPPYLIFEKSAVENQRVFLQENLGLSANKKWIFVHSGSGGSATNLSLAQYADLIKGLLAEFDCNVVLTAGPGESEKAYELANLVNDLRVAIYDKNKGLVDFAHSLACADLFIAGSTGPLHLSSAFNIPTIGFYPNSRSSQPRRWKPINDVDKHIAFCPPAGKESQMNLELISIDNALAEISLFIRNMWQTSNNI</sequence>
<proteinExistence type="inferred from homology"/>
<protein>
    <recommendedName>
        <fullName>Putative glycosyltransferase HI_0523</fullName>
        <ecNumber>2.-.-.-</ecNumber>
    </recommendedName>
</protein>
<name>Y523_HAEIN</name>
<dbReference type="EC" id="2.-.-.-"/>
<dbReference type="EMBL" id="L42023">
    <property type="protein sequence ID" value="AAC22181.1"/>
    <property type="status" value="ALT_INIT"/>
    <property type="molecule type" value="Genomic_DNA"/>
</dbReference>
<dbReference type="PIR" id="B64009">
    <property type="entry name" value="B64009"/>
</dbReference>
<dbReference type="RefSeq" id="NP_438681.2">
    <property type="nucleotide sequence ID" value="NC_000907.1"/>
</dbReference>
<dbReference type="SMR" id="P44011"/>
<dbReference type="STRING" id="71421.HI_0523"/>
<dbReference type="CAZy" id="GT9">
    <property type="family name" value="Glycosyltransferase Family 9"/>
</dbReference>
<dbReference type="EnsemblBacteria" id="AAC22181">
    <property type="protein sequence ID" value="AAC22181"/>
    <property type="gene ID" value="HI_0523"/>
</dbReference>
<dbReference type="KEGG" id="hin:HI_0523"/>
<dbReference type="PATRIC" id="fig|71421.8.peg.542"/>
<dbReference type="eggNOG" id="COG0859">
    <property type="taxonomic scope" value="Bacteria"/>
</dbReference>
<dbReference type="HOGENOM" id="CLU_038371_1_0_6"/>
<dbReference type="OrthoDB" id="9797795at2"/>
<dbReference type="BioCyc" id="HINF71421:G1GJ1-536-MONOMER"/>
<dbReference type="Proteomes" id="UP000000579">
    <property type="component" value="Chromosome"/>
</dbReference>
<dbReference type="GO" id="GO:0005829">
    <property type="term" value="C:cytosol"/>
    <property type="evidence" value="ECO:0000318"/>
    <property type="project" value="GO_Central"/>
</dbReference>
<dbReference type="GO" id="GO:0008713">
    <property type="term" value="F:ADP-heptose-lipopolysaccharide heptosyltransferase activity"/>
    <property type="evidence" value="ECO:0000318"/>
    <property type="project" value="GO_Central"/>
</dbReference>
<dbReference type="GO" id="GO:0009244">
    <property type="term" value="P:lipopolysaccharide core region biosynthetic process"/>
    <property type="evidence" value="ECO:0000318"/>
    <property type="project" value="GO_Central"/>
</dbReference>
<dbReference type="CDD" id="cd03789">
    <property type="entry name" value="GT9_LPS_heptosyltransferase"/>
    <property type="match status" value="1"/>
</dbReference>
<dbReference type="FunFam" id="3.40.50.2000:FF:000211">
    <property type="entry name" value="ADP-heptose:LPS heptosyltransferase II"/>
    <property type="match status" value="1"/>
</dbReference>
<dbReference type="Gene3D" id="3.40.50.2000">
    <property type="entry name" value="Glycogen Phosphorylase B"/>
    <property type="match status" value="2"/>
</dbReference>
<dbReference type="InterPro" id="IPR002201">
    <property type="entry name" value="Glyco_trans_9"/>
</dbReference>
<dbReference type="InterPro" id="IPR051199">
    <property type="entry name" value="LPS_LOS_Heptosyltrfase"/>
</dbReference>
<dbReference type="PANTHER" id="PTHR30160:SF15">
    <property type="entry name" value="GLYCOSYLTRANSFERASE HI_0523-RELATED"/>
    <property type="match status" value="1"/>
</dbReference>
<dbReference type="PANTHER" id="PTHR30160">
    <property type="entry name" value="TETRAACYLDISACCHARIDE 4'-KINASE-RELATED"/>
    <property type="match status" value="1"/>
</dbReference>
<dbReference type="Pfam" id="PF01075">
    <property type="entry name" value="Glyco_transf_9"/>
    <property type="match status" value="1"/>
</dbReference>
<dbReference type="SUPFAM" id="SSF53756">
    <property type="entry name" value="UDP-Glycosyltransferase/glycogen phosphorylase"/>
    <property type="match status" value="1"/>
</dbReference>
<comment type="similarity">
    <text evidence="1">Belongs to the glycosyltransferase 9 family.</text>
</comment>
<comment type="sequence caution" evidence="1">
    <conflict type="erroneous initiation">
        <sequence resource="EMBL-CDS" id="AAC22181"/>
    </conflict>
    <text>Extended N-terminus.</text>
</comment>
<gene>
    <name type="ordered locus">HI_0523</name>
</gene>
<feature type="chain" id="PRO_0000013959" description="Putative glycosyltransferase HI_0523">
    <location>
        <begin position="1"/>
        <end position="346"/>
    </location>
</feature>
<evidence type="ECO:0000305" key="1"/>